<keyword id="KW-0227">DNA damage</keyword>
<keyword id="KW-0233">DNA recombination</keyword>
<keyword id="KW-0234">DNA repair</keyword>
<keyword id="KW-0378">Hydrolase</keyword>
<keyword id="KW-0460">Magnesium</keyword>
<keyword id="KW-0540">Nuclease</keyword>
<keyword id="KW-0597">Phosphoprotein</keyword>
<keyword id="KW-1185">Reference proteome</keyword>
<dbReference type="EC" id="3.1.-.-"/>
<dbReference type="EMBL" id="MT903340">
    <property type="protein sequence ID" value="QNP13004.1"/>
    <property type="molecule type" value="Genomic_DNA"/>
</dbReference>
<dbReference type="RefSeq" id="NP_536560.1">
    <property type="nucleotide sequence ID" value="NC_003310.1"/>
</dbReference>
<dbReference type="RefSeq" id="YP_010377131.1">
    <property type="nucleotide sequence ID" value="NC_063383.1"/>
</dbReference>
<dbReference type="SMR" id="A0A7H0DNC1"/>
<dbReference type="GeneID" id="72551544"/>
<dbReference type="GeneID" id="928984"/>
<dbReference type="KEGG" id="vg:928984"/>
<dbReference type="Proteomes" id="UP000516359">
    <property type="component" value="Genome"/>
</dbReference>
<dbReference type="GO" id="GO:0000400">
    <property type="term" value="F:four-way junction DNA binding"/>
    <property type="evidence" value="ECO:0007669"/>
    <property type="project" value="InterPro"/>
</dbReference>
<dbReference type="GO" id="GO:0000287">
    <property type="term" value="F:magnesium ion binding"/>
    <property type="evidence" value="ECO:0007669"/>
    <property type="project" value="InterPro"/>
</dbReference>
<dbReference type="GO" id="GO:0004518">
    <property type="term" value="F:nuclease activity"/>
    <property type="evidence" value="ECO:0007669"/>
    <property type="project" value="UniProtKB-KW"/>
</dbReference>
<dbReference type="GO" id="GO:0006310">
    <property type="term" value="P:DNA recombination"/>
    <property type="evidence" value="ECO:0007669"/>
    <property type="project" value="UniProtKB-KW"/>
</dbReference>
<dbReference type="GO" id="GO:0006281">
    <property type="term" value="P:DNA repair"/>
    <property type="evidence" value="ECO:0007669"/>
    <property type="project" value="UniProtKB-KW"/>
</dbReference>
<dbReference type="InterPro" id="IPR006932">
    <property type="entry name" value="HJ-resolvase_A22"/>
</dbReference>
<dbReference type="InterPro" id="IPR012337">
    <property type="entry name" value="RNaseH-like_sf"/>
</dbReference>
<dbReference type="Pfam" id="PF04848">
    <property type="entry name" value="Pox_A22"/>
    <property type="match status" value="1"/>
</dbReference>
<dbReference type="SUPFAM" id="SSF53098">
    <property type="entry name" value="Ribonuclease H-like"/>
    <property type="match status" value="1"/>
</dbReference>
<protein>
    <recommendedName>
        <fullName>Resolvase OPG149</fullName>
        <ecNumber>3.1.-.-</ecNumber>
    </recommendedName>
</protein>
<accession>A0A7H0DNC1</accession>
<evidence type="ECO:0000250" key="1">
    <source>
        <dbReference type="UniProtKB" id="Q80HV3"/>
    </source>
</evidence>
<evidence type="ECO:0000305" key="2"/>
<reference key="1">
    <citation type="journal article" date="2022" name="J. Infect. Dis.">
        <title>Exportation of Monkeypox virus from the African continent.</title>
        <authorList>
            <person name="Mauldin M.R."/>
            <person name="McCollum A.M."/>
            <person name="Nakazawa Y.J."/>
            <person name="Mandra A."/>
            <person name="Whitehouse E.R."/>
            <person name="Davidson W."/>
            <person name="Zhao H."/>
            <person name="Gao J."/>
            <person name="Li Y."/>
            <person name="Doty J."/>
            <person name="Yinka-Ogunleye A."/>
            <person name="Akinpelu A."/>
            <person name="Aruna O."/>
            <person name="Naidoo D."/>
            <person name="Lewandowski K."/>
            <person name="Afrough B."/>
            <person name="Graham V."/>
            <person name="Aarons E."/>
            <person name="Hewson R."/>
            <person name="Vipond R."/>
            <person name="Dunning J."/>
            <person name="Chand M."/>
            <person name="Brown C."/>
            <person name="Cohen-Gihon I."/>
            <person name="Erez N."/>
            <person name="Shifman O."/>
            <person name="Israeli O."/>
            <person name="Sharon M."/>
            <person name="Schwartz E."/>
            <person name="Beth-Din A."/>
            <person name="Zvi A."/>
            <person name="Mak T.M."/>
            <person name="Ng Y.K."/>
            <person name="Cui L."/>
            <person name="Lin R.T.P."/>
            <person name="Olson V.A."/>
            <person name="Brooks T."/>
            <person name="Paran N."/>
            <person name="Ihekweazu C."/>
            <person name="Reynolds M.G."/>
        </authorList>
    </citation>
    <scope>NUCLEOTIDE SEQUENCE [LARGE SCALE GENOMIC DNA]</scope>
    <source>
        <strain>MPXV-M5312_HM12_Rivers</strain>
    </source>
</reference>
<organismHost>
    <name type="scientific">Cynomys gunnisoni</name>
    <name type="common">Gunnison's prairie dog</name>
    <name type="synonym">Spermophilus gunnisoni</name>
    <dbReference type="NCBI Taxonomy" id="45479"/>
</organismHost>
<organismHost>
    <name type="scientific">Cynomys leucurus</name>
    <name type="common">White-tailed prairie dog</name>
    <dbReference type="NCBI Taxonomy" id="99825"/>
</organismHost>
<organismHost>
    <name type="scientific">Cynomys ludovicianus</name>
    <name type="common">Black-tailed prairie dog</name>
    <dbReference type="NCBI Taxonomy" id="45480"/>
</organismHost>
<organismHost>
    <name type="scientific">Cynomys mexicanus</name>
    <name type="common">Mexican prairie dog</name>
    <dbReference type="NCBI Taxonomy" id="99826"/>
</organismHost>
<organismHost>
    <name type="scientific">Cynomys parvidens</name>
    <name type="common">Utah prairie dog</name>
    <dbReference type="NCBI Taxonomy" id="99827"/>
</organismHost>
<organismHost>
    <name type="scientific">Gliridae</name>
    <name type="common">dormice</name>
    <dbReference type="NCBI Taxonomy" id="30650"/>
</organismHost>
<organismHost>
    <name type="scientific">Heliosciurus ruwenzorii</name>
    <name type="common">Ruwenzori sun squirrel</name>
    <dbReference type="NCBI Taxonomy" id="226685"/>
</organismHost>
<organismHost>
    <name type="scientific">Homo sapiens</name>
    <name type="common">Human</name>
    <dbReference type="NCBI Taxonomy" id="9606"/>
</organismHost>
<organismHost>
    <name type="scientific">Mus musculus</name>
    <name type="common">Mouse</name>
    <dbReference type="NCBI Taxonomy" id="10090"/>
</organismHost>
<comment type="function">
    <text evidence="1">Plays a role in DNA replication by cleaving viral DNA concatamers to yield unit-length viral genomes. The concatamer junctions contain inverted repeat sequences that can be extruded as cruciforms, yielding Holliday junctions that A22 protein cleaves.</text>
</comment>
<comment type="cofactor">
    <cofactor evidence="1">
        <name>Mg(2+)</name>
        <dbReference type="ChEBI" id="CHEBI:18420"/>
    </cofactor>
    <text evidence="1">Binds 1 Mg(2+) ion per subunit.</text>
</comment>
<comment type="similarity">
    <text evidence="2">Belongs to the RuvC family. Poxviruses-type subfamily.</text>
</comment>
<gene>
    <name type="primary">OPG149</name>
    <name type="ORF">MPXVgp133</name>
</gene>
<organism>
    <name type="scientific">Monkeypox virus</name>
    <dbReference type="NCBI Taxonomy" id="10244"/>
    <lineage>
        <taxon>Viruses</taxon>
        <taxon>Varidnaviria</taxon>
        <taxon>Bamfordvirae</taxon>
        <taxon>Nucleocytoviricota</taxon>
        <taxon>Pokkesviricetes</taxon>
        <taxon>Chitovirales</taxon>
        <taxon>Poxviridae</taxon>
        <taxon>Chordopoxvirinae</taxon>
        <taxon>Orthopoxvirus</taxon>
    </lineage>
</organism>
<feature type="chain" id="PRO_0000457549" description="Resolvase OPG149">
    <location>
        <begin position="1"/>
        <end position="187"/>
    </location>
</feature>
<name>RUVV_MONPV</name>
<sequence length="187" mass="21965">METSTSSSQSLIPLPMSKKDYSSEIICAFDIGAKNPARTVLEVKDNSVRVLDISKLDWSSDWERRIAQDLSQYEYTTVLLERQPRRSPYVKFIYFIKGFLYHTSAAKVICVSPVMSGNSYRDRKKRSVEAFLDWMDTFGLRDSVPDRRKLDDVADSFNLAMRYVLDKWNTNYTPYNRCKYRNYIKKM</sequence>
<proteinExistence type="inferred from homology"/>